<gene>
    <name type="primary">Ost48</name>
    <name type="synonym">OST50</name>
    <name type="ORF">CG9022</name>
</gene>
<dbReference type="EMBL" id="X81999">
    <property type="protein sequence ID" value="CAA57525.1"/>
    <property type="molecule type" value="mRNA"/>
</dbReference>
<dbReference type="EMBL" id="AE014298">
    <property type="protein sequence ID" value="AAF46453.1"/>
    <property type="molecule type" value="Genomic_DNA"/>
</dbReference>
<dbReference type="EMBL" id="BT010050">
    <property type="protein sequence ID" value="AAQ22519.1"/>
    <property type="molecule type" value="mRNA"/>
</dbReference>
<dbReference type="EMBL" id="X81207">
    <property type="protein sequence ID" value="CAA57079.1"/>
    <property type="molecule type" value="Genomic_DNA"/>
</dbReference>
<dbReference type="PIR" id="JC4132">
    <property type="entry name" value="JC4132"/>
</dbReference>
<dbReference type="RefSeq" id="NP_511096.2">
    <property type="nucleotide sequence ID" value="NM_078541.4"/>
</dbReference>
<dbReference type="SMR" id="Q24319"/>
<dbReference type="BioGRID" id="58304">
    <property type="interactions" value="82"/>
</dbReference>
<dbReference type="ComplexPortal" id="CPX-8761">
    <property type="entry name" value="Oligosaccharyltransferase A complex"/>
</dbReference>
<dbReference type="ComplexPortal" id="CPX-8803">
    <property type="entry name" value="Oligosaccharyltransferase B complex"/>
</dbReference>
<dbReference type="FunCoup" id="Q24319">
    <property type="interactions" value="1973"/>
</dbReference>
<dbReference type="IntAct" id="Q24319">
    <property type="interactions" value="113"/>
</dbReference>
<dbReference type="STRING" id="7227.FBpp0071279"/>
<dbReference type="PaxDb" id="7227-FBpp0071279"/>
<dbReference type="DNASU" id="31849"/>
<dbReference type="EnsemblMetazoa" id="FBtr0071344">
    <property type="protein sequence ID" value="FBpp0071279"/>
    <property type="gene ID" value="FBgn0014868"/>
</dbReference>
<dbReference type="GeneID" id="31849"/>
<dbReference type="KEGG" id="dme:Dmel_CG9022"/>
<dbReference type="AGR" id="FB:FBgn0014868"/>
<dbReference type="CTD" id="31849"/>
<dbReference type="FlyBase" id="FBgn0014868">
    <property type="gene designation" value="Ost48"/>
</dbReference>
<dbReference type="VEuPathDB" id="VectorBase:FBgn0014868"/>
<dbReference type="eggNOG" id="KOG2754">
    <property type="taxonomic scope" value="Eukaryota"/>
</dbReference>
<dbReference type="GeneTree" id="ENSGT00390000017294"/>
<dbReference type="HOGENOM" id="CLU_031804_0_0_1"/>
<dbReference type="InParanoid" id="Q24319"/>
<dbReference type="OMA" id="AHDEYPR"/>
<dbReference type="OrthoDB" id="29105at2759"/>
<dbReference type="PhylomeDB" id="Q24319"/>
<dbReference type="Reactome" id="R-DME-6798695">
    <property type="pathway name" value="Neutrophil degranulation"/>
</dbReference>
<dbReference type="UniPathway" id="UPA00378"/>
<dbReference type="BioGRID-ORCS" id="31849">
    <property type="hits" value="0 hits in 1 CRISPR screen"/>
</dbReference>
<dbReference type="GenomeRNAi" id="31849"/>
<dbReference type="PRO" id="PR:Q24319"/>
<dbReference type="Proteomes" id="UP000000803">
    <property type="component" value="Chromosome X"/>
</dbReference>
<dbReference type="Bgee" id="FBgn0014868">
    <property type="expression patterns" value="Expressed in adult middle midgut class II enteroendocrine cell in adult midgut (Drosophila) and 188 other cell types or tissues"/>
</dbReference>
<dbReference type="GO" id="GO:0012505">
    <property type="term" value="C:endomembrane system"/>
    <property type="evidence" value="ECO:0007005"/>
    <property type="project" value="FlyBase"/>
</dbReference>
<dbReference type="GO" id="GO:0008250">
    <property type="term" value="C:oligosaccharyltransferase complex"/>
    <property type="evidence" value="ECO:0000318"/>
    <property type="project" value="GO_Central"/>
</dbReference>
<dbReference type="GO" id="GO:0018279">
    <property type="term" value="P:protein N-linked glycosylation via asparagine"/>
    <property type="evidence" value="ECO:0000318"/>
    <property type="project" value="GO_Central"/>
</dbReference>
<dbReference type="InterPro" id="IPR005013">
    <property type="entry name" value="DDOST_48_kDa_subunit"/>
</dbReference>
<dbReference type="InterPro" id="IPR055459">
    <property type="entry name" value="OST48_MD"/>
</dbReference>
<dbReference type="InterPro" id="IPR055457">
    <property type="entry name" value="OST48_N"/>
</dbReference>
<dbReference type="PANTHER" id="PTHR10830">
    <property type="entry name" value="DOLICHYL-DIPHOSPHOOLIGOSACCHARIDE--PROTEIN GLYCOSYLTRANSFERASE 48 KDA SUBUNIT"/>
    <property type="match status" value="1"/>
</dbReference>
<dbReference type="PANTHER" id="PTHR10830:SF0">
    <property type="entry name" value="DOLICHYL-DIPHOSPHOOLIGOSACCHARIDE--PROTEIN GLYCOSYLTRANSFERASE 48 KDA SUBUNIT"/>
    <property type="match status" value="1"/>
</dbReference>
<dbReference type="Pfam" id="PF23358">
    <property type="entry name" value="OST48_MD"/>
    <property type="match status" value="1"/>
</dbReference>
<dbReference type="Pfam" id="PF03345">
    <property type="entry name" value="OST48_N"/>
    <property type="match status" value="1"/>
</dbReference>
<proteinExistence type="evidence at transcript level"/>
<comment type="function">
    <text evidence="2 3">Subunit of the oligosaccharyl transferase (OST) complex that catalyzes the initial transfer of a defined glycan (Glc(3)Man(9)GlcNAc(2) in eukaryotes) from the lipid carrier dolichol-pyrophosphate to an asparagine residue within an Asn-X-Ser/Thr consensus motif in nascent polypeptide chains, the first step in protein N-glycosylation. N-glycosylation occurs cotranslationally and the complex associates with the Sec61 complex at the channel-forming translocon complex that mediates protein translocation across the endoplasmic reticulum (ER). All subunits are required for a maximal enzyme activity (By similarity). Required for the assembly of both SST3A- and SS3B-containing OST complexes (By similarity).</text>
</comment>
<comment type="pathway">
    <text>Protein modification; protein glycosylation.</text>
</comment>
<comment type="subunit">
    <text evidence="3">Component of the oligosaccharyltransferase (OST) complex.</text>
</comment>
<comment type="subcellular location">
    <subcellularLocation>
        <location evidence="1">Endoplasmic reticulum membrane</location>
        <topology evidence="1">Single-pass type I membrane protein</topology>
    </subcellularLocation>
</comment>
<comment type="similarity">
    <text evidence="5">Belongs to the DDOST 48 kDa subunit family.</text>
</comment>
<accession>Q24319</accession>
<accession>Q24355</accession>
<accession>Q9W382</accession>
<evidence type="ECO:0000250" key="1"/>
<evidence type="ECO:0000250" key="2">
    <source>
        <dbReference type="UniProtKB" id="P39656"/>
    </source>
</evidence>
<evidence type="ECO:0000250" key="3">
    <source>
        <dbReference type="UniProtKB" id="Q05052"/>
    </source>
</evidence>
<evidence type="ECO:0000255" key="4"/>
<evidence type="ECO:0000305" key="5"/>
<sequence length="449" mass="49981">MMWKALLIAVLAIAHCQAVLETDANTLVLLDNLAIRETHSIFFKSLQDRGFKLTYKLADDSSLLLSKYGEYLYKNVIIFAPSVEEFGGDVSVERLAQFVDDGGNVLVAGSEKSGDALREFASECGFELDEENAAVIDHLHYDVSDAGEHTTILTSAKNLIQADTIVGKANRQADAAPLLYRGTGLIADKENPLVLKLLTAESTAYSYNPEASVSDYPHAVGRGTLLIAALQARNNARVVFSGSLLFFSDESFTTAVQYAQSGVFHKLAGNRDVAESISKWVFGETGRLRVASVQHHKEGELLPPDQAYTITDPVVYTIGIEELVQGEWRAFKASDIQLEFVRIDPFVRTYLKQTNTGAYQAKFKIPDVYGVYQFKVDYNRVGYTHLYSTTQVSVRPLEHTQYERFIPSAFPYYTSAFSMMIGVFVFSFVFLHFKDEPVGRAAKEDKKSQ</sequence>
<feature type="signal peptide" evidence="4">
    <location>
        <begin position="1"/>
        <end position="18"/>
    </location>
</feature>
<feature type="chain" id="PRO_0000021956" description="Dolichyl-diphosphooligosaccharide--protein glycosyltransferase 48 kDa subunit">
    <location>
        <begin position="19"/>
        <end position="449"/>
    </location>
</feature>
<feature type="topological domain" description="Lumenal" evidence="4">
    <location>
        <begin position="19"/>
        <end position="412"/>
    </location>
</feature>
<feature type="transmembrane region" description="Helical" evidence="4">
    <location>
        <begin position="413"/>
        <end position="433"/>
    </location>
</feature>
<feature type="topological domain" description="Cytoplasmic" evidence="4">
    <location>
        <begin position="434"/>
        <end position="449"/>
    </location>
</feature>
<feature type="sequence conflict" description="In Ref. 1; CAA57525." evidence="5" ref="1">
    <original>R</original>
    <variation>A</variation>
    <location>
        <position position="94"/>
    </location>
</feature>
<feature type="sequence conflict" description="In Ref. 5; CAA57079." evidence="5" ref="5">
    <original>EH</original>
    <variation>DD</variation>
    <location>
        <begin position="148"/>
        <end position="149"/>
    </location>
</feature>
<feature type="sequence conflict" description="In Ref. 5; CAA57079." evidence="5" ref="5">
    <original>AA</original>
    <variation>R</variation>
    <location>
        <begin position="175"/>
        <end position="176"/>
    </location>
</feature>
<feature type="sequence conflict" description="In Ref. 5; CAA57079." evidence="5" ref="5">
    <original>LL</original>
    <variation>VV</variation>
    <location>
        <begin position="225"/>
        <end position="226"/>
    </location>
</feature>
<feature type="sequence conflict" description="In Ref. 5; CAA57079." evidence="5" ref="5">
    <original>RLR</original>
    <variation>QVG</variation>
    <location>
        <begin position="287"/>
        <end position="289"/>
    </location>
</feature>
<feature type="sequence conflict" description="In Ref. 1; CAA57525." evidence="5" ref="1">
    <original>R</original>
    <variation>V</variation>
    <location>
        <position position="289"/>
    </location>
</feature>
<feature type="sequence conflict" description="In Ref. 5; CAA57079." evidence="5" ref="5">
    <original>P</original>
    <variation>T</variation>
    <location>
        <position position="304"/>
    </location>
</feature>
<feature type="sequence conflict" description="In Ref. 1; CAA57525." evidence="5" ref="1">
    <original>RA</original>
    <variation>AR</variation>
    <location>
        <begin position="329"/>
        <end position="330"/>
    </location>
</feature>
<feature type="sequence conflict" description="In Ref. 5; CAA57079." evidence="5" ref="5">
    <original>D</original>
    <variation>A</variation>
    <location>
        <position position="335"/>
    </location>
</feature>
<reference key="1">
    <citation type="journal article" date="1995" name="Gene">
        <title>PCR-mediated cloning and sequencing of the DmOST50 gene, a WBP1/AvOST50/OST48 homologue, from Drosophila melanogaster.</title>
        <authorList>
            <person name="Stagljar I."/>
            <person name="Te Heesen S."/>
            <person name="Aebi M."/>
        </authorList>
    </citation>
    <scope>NUCLEOTIDE SEQUENCE [MRNA]</scope>
</reference>
<reference key="2">
    <citation type="journal article" date="2000" name="Science">
        <title>The genome sequence of Drosophila melanogaster.</title>
        <authorList>
            <person name="Adams M.D."/>
            <person name="Celniker S.E."/>
            <person name="Holt R.A."/>
            <person name="Evans C.A."/>
            <person name="Gocayne J.D."/>
            <person name="Amanatides P.G."/>
            <person name="Scherer S.E."/>
            <person name="Li P.W."/>
            <person name="Hoskins R.A."/>
            <person name="Galle R.F."/>
            <person name="George R.A."/>
            <person name="Lewis S.E."/>
            <person name="Richards S."/>
            <person name="Ashburner M."/>
            <person name="Henderson S.N."/>
            <person name="Sutton G.G."/>
            <person name="Wortman J.R."/>
            <person name="Yandell M.D."/>
            <person name="Zhang Q."/>
            <person name="Chen L.X."/>
            <person name="Brandon R.C."/>
            <person name="Rogers Y.-H.C."/>
            <person name="Blazej R.G."/>
            <person name="Champe M."/>
            <person name="Pfeiffer B.D."/>
            <person name="Wan K.H."/>
            <person name="Doyle C."/>
            <person name="Baxter E.G."/>
            <person name="Helt G."/>
            <person name="Nelson C.R."/>
            <person name="Miklos G.L.G."/>
            <person name="Abril J.F."/>
            <person name="Agbayani A."/>
            <person name="An H.-J."/>
            <person name="Andrews-Pfannkoch C."/>
            <person name="Baldwin D."/>
            <person name="Ballew R.M."/>
            <person name="Basu A."/>
            <person name="Baxendale J."/>
            <person name="Bayraktaroglu L."/>
            <person name="Beasley E.M."/>
            <person name="Beeson K.Y."/>
            <person name="Benos P.V."/>
            <person name="Berman B.P."/>
            <person name="Bhandari D."/>
            <person name="Bolshakov S."/>
            <person name="Borkova D."/>
            <person name="Botchan M.R."/>
            <person name="Bouck J."/>
            <person name="Brokstein P."/>
            <person name="Brottier P."/>
            <person name="Burtis K.C."/>
            <person name="Busam D.A."/>
            <person name="Butler H."/>
            <person name="Cadieu E."/>
            <person name="Center A."/>
            <person name="Chandra I."/>
            <person name="Cherry J.M."/>
            <person name="Cawley S."/>
            <person name="Dahlke C."/>
            <person name="Davenport L.B."/>
            <person name="Davies P."/>
            <person name="de Pablos B."/>
            <person name="Delcher A."/>
            <person name="Deng Z."/>
            <person name="Mays A.D."/>
            <person name="Dew I."/>
            <person name="Dietz S.M."/>
            <person name="Dodson K."/>
            <person name="Doup L.E."/>
            <person name="Downes M."/>
            <person name="Dugan-Rocha S."/>
            <person name="Dunkov B.C."/>
            <person name="Dunn P."/>
            <person name="Durbin K.J."/>
            <person name="Evangelista C.C."/>
            <person name="Ferraz C."/>
            <person name="Ferriera S."/>
            <person name="Fleischmann W."/>
            <person name="Fosler C."/>
            <person name="Gabrielian A.E."/>
            <person name="Garg N.S."/>
            <person name="Gelbart W.M."/>
            <person name="Glasser K."/>
            <person name="Glodek A."/>
            <person name="Gong F."/>
            <person name="Gorrell J.H."/>
            <person name="Gu Z."/>
            <person name="Guan P."/>
            <person name="Harris M."/>
            <person name="Harris N.L."/>
            <person name="Harvey D.A."/>
            <person name="Heiman T.J."/>
            <person name="Hernandez J.R."/>
            <person name="Houck J."/>
            <person name="Hostin D."/>
            <person name="Houston K.A."/>
            <person name="Howland T.J."/>
            <person name="Wei M.-H."/>
            <person name="Ibegwam C."/>
            <person name="Jalali M."/>
            <person name="Kalush F."/>
            <person name="Karpen G.H."/>
            <person name="Ke Z."/>
            <person name="Kennison J.A."/>
            <person name="Ketchum K.A."/>
            <person name="Kimmel B.E."/>
            <person name="Kodira C.D."/>
            <person name="Kraft C.L."/>
            <person name="Kravitz S."/>
            <person name="Kulp D."/>
            <person name="Lai Z."/>
            <person name="Lasko P."/>
            <person name="Lei Y."/>
            <person name="Levitsky A.A."/>
            <person name="Li J.H."/>
            <person name="Li Z."/>
            <person name="Liang Y."/>
            <person name="Lin X."/>
            <person name="Liu X."/>
            <person name="Mattei B."/>
            <person name="McIntosh T.C."/>
            <person name="McLeod M.P."/>
            <person name="McPherson D."/>
            <person name="Merkulov G."/>
            <person name="Milshina N.V."/>
            <person name="Mobarry C."/>
            <person name="Morris J."/>
            <person name="Moshrefi A."/>
            <person name="Mount S.M."/>
            <person name="Moy M."/>
            <person name="Murphy B."/>
            <person name="Murphy L."/>
            <person name="Muzny D.M."/>
            <person name="Nelson D.L."/>
            <person name="Nelson D.R."/>
            <person name="Nelson K.A."/>
            <person name="Nixon K."/>
            <person name="Nusskern D.R."/>
            <person name="Pacleb J.M."/>
            <person name="Palazzolo M."/>
            <person name="Pittman G.S."/>
            <person name="Pan S."/>
            <person name="Pollard J."/>
            <person name="Puri V."/>
            <person name="Reese M.G."/>
            <person name="Reinert K."/>
            <person name="Remington K."/>
            <person name="Saunders R.D.C."/>
            <person name="Scheeler F."/>
            <person name="Shen H."/>
            <person name="Shue B.C."/>
            <person name="Siden-Kiamos I."/>
            <person name="Simpson M."/>
            <person name="Skupski M.P."/>
            <person name="Smith T.J."/>
            <person name="Spier E."/>
            <person name="Spradling A.C."/>
            <person name="Stapleton M."/>
            <person name="Strong R."/>
            <person name="Sun E."/>
            <person name="Svirskas R."/>
            <person name="Tector C."/>
            <person name="Turner R."/>
            <person name="Venter E."/>
            <person name="Wang A.H."/>
            <person name="Wang X."/>
            <person name="Wang Z.-Y."/>
            <person name="Wassarman D.A."/>
            <person name="Weinstock G.M."/>
            <person name="Weissenbach J."/>
            <person name="Williams S.M."/>
            <person name="Woodage T."/>
            <person name="Worley K.C."/>
            <person name="Wu D."/>
            <person name="Yang S."/>
            <person name="Yao Q.A."/>
            <person name="Ye J."/>
            <person name="Yeh R.-F."/>
            <person name="Zaveri J.S."/>
            <person name="Zhan M."/>
            <person name="Zhang G."/>
            <person name="Zhao Q."/>
            <person name="Zheng L."/>
            <person name="Zheng X.H."/>
            <person name="Zhong F.N."/>
            <person name="Zhong W."/>
            <person name="Zhou X."/>
            <person name="Zhu S.C."/>
            <person name="Zhu X."/>
            <person name="Smith H.O."/>
            <person name="Gibbs R.A."/>
            <person name="Myers E.W."/>
            <person name="Rubin G.M."/>
            <person name="Venter J.C."/>
        </authorList>
    </citation>
    <scope>NUCLEOTIDE SEQUENCE [LARGE SCALE GENOMIC DNA]</scope>
    <source>
        <strain>Berkeley</strain>
    </source>
</reference>
<reference key="3">
    <citation type="journal article" date="2002" name="Genome Biol.">
        <title>Annotation of the Drosophila melanogaster euchromatic genome: a systematic review.</title>
        <authorList>
            <person name="Misra S."/>
            <person name="Crosby M.A."/>
            <person name="Mungall C.J."/>
            <person name="Matthews B.B."/>
            <person name="Campbell K.S."/>
            <person name="Hradecky P."/>
            <person name="Huang Y."/>
            <person name="Kaminker J.S."/>
            <person name="Millburn G.H."/>
            <person name="Prochnik S.E."/>
            <person name="Smith C.D."/>
            <person name="Tupy J.L."/>
            <person name="Whitfield E.J."/>
            <person name="Bayraktaroglu L."/>
            <person name="Berman B.P."/>
            <person name="Bettencourt B.R."/>
            <person name="Celniker S.E."/>
            <person name="de Grey A.D.N.J."/>
            <person name="Drysdale R.A."/>
            <person name="Harris N.L."/>
            <person name="Richter J."/>
            <person name="Russo S."/>
            <person name="Schroeder A.J."/>
            <person name="Shu S.Q."/>
            <person name="Stapleton M."/>
            <person name="Yamada C."/>
            <person name="Ashburner M."/>
            <person name="Gelbart W.M."/>
            <person name="Rubin G.M."/>
            <person name="Lewis S.E."/>
        </authorList>
    </citation>
    <scope>GENOME REANNOTATION</scope>
    <source>
        <strain>Berkeley</strain>
    </source>
</reference>
<reference key="4">
    <citation type="submission" date="2003-08" db="EMBL/GenBank/DDBJ databases">
        <authorList>
            <person name="Stapleton M."/>
            <person name="Brokstein P."/>
            <person name="Hong L."/>
            <person name="Agbayani A."/>
            <person name="Carlson J.W."/>
            <person name="Champe M."/>
            <person name="Chavez C."/>
            <person name="Dorsett V."/>
            <person name="Dresnek D."/>
            <person name="Farfan D."/>
            <person name="Frise E."/>
            <person name="George R.A."/>
            <person name="Gonzalez M."/>
            <person name="Guarin H."/>
            <person name="Kronmiller B."/>
            <person name="Li P.W."/>
            <person name="Liao G."/>
            <person name="Miranda A."/>
            <person name="Mungall C.J."/>
            <person name="Nunoo J."/>
            <person name="Pacleb J.M."/>
            <person name="Paragas V."/>
            <person name="Park S."/>
            <person name="Patel S."/>
            <person name="Phouanenavong S."/>
            <person name="Wan K.H."/>
            <person name="Yu C."/>
            <person name="Lewis S.E."/>
            <person name="Rubin G.M."/>
            <person name="Celniker S.E."/>
        </authorList>
    </citation>
    <scope>NUCLEOTIDE SEQUENCE [LARGE SCALE MRNA]</scope>
    <source>
        <strain>Berkeley</strain>
        <tissue>Embryo</tissue>
    </source>
</reference>
<reference key="5">
    <citation type="journal article" date="1995" name="Genome">
        <title>Structure and expression of histone H3.3 genes in Drosophila melanogaster and Drosophila hydei.</title>
        <authorList>
            <person name="Akhmanova A.S."/>
            <person name="Bindels P.S.T."/>
            <person name="Xu J."/>
            <person name="Miedema K."/>
            <person name="Kremer H."/>
            <person name="Hennig W."/>
        </authorList>
    </citation>
    <scope>NUCLEOTIDE SEQUENCE [GENOMIC DNA] OF 119-449</scope>
</reference>
<name>OST48_DROME</name>
<organism>
    <name type="scientific">Drosophila melanogaster</name>
    <name type="common">Fruit fly</name>
    <dbReference type="NCBI Taxonomy" id="7227"/>
    <lineage>
        <taxon>Eukaryota</taxon>
        <taxon>Metazoa</taxon>
        <taxon>Ecdysozoa</taxon>
        <taxon>Arthropoda</taxon>
        <taxon>Hexapoda</taxon>
        <taxon>Insecta</taxon>
        <taxon>Pterygota</taxon>
        <taxon>Neoptera</taxon>
        <taxon>Endopterygota</taxon>
        <taxon>Diptera</taxon>
        <taxon>Brachycera</taxon>
        <taxon>Muscomorpha</taxon>
        <taxon>Ephydroidea</taxon>
        <taxon>Drosophilidae</taxon>
        <taxon>Drosophila</taxon>
        <taxon>Sophophora</taxon>
    </lineage>
</organism>
<protein>
    <recommendedName>
        <fullName>Dolichyl-diphosphooligosaccharide--protein glycosyltransferase 48 kDa subunit</fullName>
        <shortName>DDOST 48 kDa subunit</shortName>
        <shortName>Oligosaccharyl transferase 48 kDa subunit</shortName>
    </recommendedName>
    <alternativeName>
        <fullName>DmOST50</fullName>
        <shortName>DrOST</shortName>
    </alternativeName>
    <alternativeName>
        <fullName>OST5OP</fullName>
    </alternativeName>
</protein>
<keyword id="KW-0256">Endoplasmic reticulum</keyword>
<keyword id="KW-0472">Membrane</keyword>
<keyword id="KW-1185">Reference proteome</keyword>
<keyword id="KW-0732">Signal</keyword>
<keyword id="KW-0812">Transmembrane</keyword>
<keyword id="KW-1133">Transmembrane helix</keyword>